<dbReference type="EMBL" id="AE017223">
    <property type="protein sequence ID" value="AAX73871.1"/>
    <property type="molecule type" value="Genomic_DNA"/>
</dbReference>
<dbReference type="RefSeq" id="WP_002963610.1">
    <property type="nucleotide sequence ID" value="NC_006932.1"/>
</dbReference>
<dbReference type="SMR" id="Q57ER3"/>
<dbReference type="EnsemblBacteria" id="AAX73871">
    <property type="protein sequence ID" value="AAX73871"/>
    <property type="gene ID" value="BruAb1_0476"/>
</dbReference>
<dbReference type="GeneID" id="97914641"/>
<dbReference type="KEGG" id="bmb:BruAb1_0476"/>
<dbReference type="HOGENOM" id="CLU_148710_2_2_5"/>
<dbReference type="Proteomes" id="UP000000540">
    <property type="component" value="Chromosome I"/>
</dbReference>
<dbReference type="GO" id="GO:0022627">
    <property type="term" value="C:cytosolic small ribosomal subunit"/>
    <property type="evidence" value="ECO:0007669"/>
    <property type="project" value="TreeGrafter"/>
</dbReference>
<dbReference type="GO" id="GO:0070181">
    <property type="term" value="F:small ribosomal subunit rRNA binding"/>
    <property type="evidence" value="ECO:0007669"/>
    <property type="project" value="TreeGrafter"/>
</dbReference>
<dbReference type="GO" id="GO:0003735">
    <property type="term" value="F:structural constituent of ribosome"/>
    <property type="evidence" value="ECO:0007669"/>
    <property type="project" value="InterPro"/>
</dbReference>
<dbReference type="GO" id="GO:0006412">
    <property type="term" value="P:translation"/>
    <property type="evidence" value="ECO:0007669"/>
    <property type="project" value="UniProtKB-UniRule"/>
</dbReference>
<dbReference type="Gene3D" id="4.10.640.10">
    <property type="entry name" value="Ribosomal protein S18"/>
    <property type="match status" value="1"/>
</dbReference>
<dbReference type="HAMAP" id="MF_00270">
    <property type="entry name" value="Ribosomal_bS18"/>
    <property type="match status" value="1"/>
</dbReference>
<dbReference type="InterPro" id="IPR001648">
    <property type="entry name" value="Ribosomal_bS18"/>
</dbReference>
<dbReference type="InterPro" id="IPR018275">
    <property type="entry name" value="Ribosomal_bS18_CS"/>
</dbReference>
<dbReference type="InterPro" id="IPR036870">
    <property type="entry name" value="Ribosomal_bS18_sf"/>
</dbReference>
<dbReference type="NCBIfam" id="TIGR00165">
    <property type="entry name" value="S18"/>
    <property type="match status" value="1"/>
</dbReference>
<dbReference type="PANTHER" id="PTHR13479">
    <property type="entry name" value="30S RIBOSOMAL PROTEIN S18"/>
    <property type="match status" value="1"/>
</dbReference>
<dbReference type="PANTHER" id="PTHR13479:SF40">
    <property type="entry name" value="SMALL RIBOSOMAL SUBUNIT PROTEIN BS18M"/>
    <property type="match status" value="1"/>
</dbReference>
<dbReference type="Pfam" id="PF01084">
    <property type="entry name" value="Ribosomal_S18"/>
    <property type="match status" value="1"/>
</dbReference>
<dbReference type="PRINTS" id="PR00974">
    <property type="entry name" value="RIBOSOMALS18"/>
</dbReference>
<dbReference type="SUPFAM" id="SSF46911">
    <property type="entry name" value="Ribosomal protein S18"/>
    <property type="match status" value="1"/>
</dbReference>
<dbReference type="PROSITE" id="PS00057">
    <property type="entry name" value="RIBOSOMAL_S18"/>
    <property type="match status" value="1"/>
</dbReference>
<feature type="chain" id="PRO_1000003454" description="Small ribosomal subunit protein bS18">
    <location>
        <begin position="1"/>
        <end position="82"/>
    </location>
</feature>
<feature type="region of interest" description="Disordered" evidence="2">
    <location>
        <begin position="1"/>
        <end position="20"/>
    </location>
</feature>
<comment type="function">
    <text evidence="1">Binds as a heterodimer with protein bS6 to the central domain of the 16S rRNA, where it helps stabilize the platform of the 30S subunit.</text>
</comment>
<comment type="subunit">
    <text evidence="1">Part of the 30S ribosomal subunit. Forms a tight heterodimer with protein bS6.</text>
</comment>
<comment type="similarity">
    <text evidence="1">Belongs to the bacterial ribosomal protein bS18 family.</text>
</comment>
<gene>
    <name evidence="1" type="primary">rpsR</name>
    <name type="ordered locus">BruAb1_0476</name>
</gene>
<reference key="1">
    <citation type="journal article" date="2005" name="J. Bacteriol.">
        <title>Completion of the genome sequence of Brucella abortus and comparison to the highly similar genomes of Brucella melitensis and Brucella suis.</title>
        <authorList>
            <person name="Halling S.M."/>
            <person name="Peterson-Burch B.D."/>
            <person name="Bricker B.J."/>
            <person name="Zuerner R.L."/>
            <person name="Qing Z."/>
            <person name="Li L.-L."/>
            <person name="Kapur V."/>
            <person name="Alt D.P."/>
            <person name="Olsen S.C."/>
        </authorList>
    </citation>
    <scope>NUCLEOTIDE SEQUENCE [LARGE SCALE GENOMIC DNA]</scope>
    <source>
        <strain>9-941</strain>
    </source>
</reference>
<sequence>MVDINQIPTRRPFHRRRKTCPFSGANAPKIDYKDVKLLQRYISERGKIVPSRITAVSQKKQRELAKAIKRARFLGLLPYVVK</sequence>
<proteinExistence type="inferred from homology"/>
<organism>
    <name type="scientific">Brucella abortus biovar 1 (strain 9-941)</name>
    <dbReference type="NCBI Taxonomy" id="262698"/>
    <lineage>
        <taxon>Bacteria</taxon>
        <taxon>Pseudomonadati</taxon>
        <taxon>Pseudomonadota</taxon>
        <taxon>Alphaproteobacteria</taxon>
        <taxon>Hyphomicrobiales</taxon>
        <taxon>Brucellaceae</taxon>
        <taxon>Brucella/Ochrobactrum group</taxon>
        <taxon>Brucella</taxon>
    </lineage>
</organism>
<keyword id="KW-0687">Ribonucleoprotein</keyword>
<keyword id="KW-0689">Ribosomal protein</keyword>
<keyword id="KW-0694">RNA-binding</keyword>
<keyword id="KW-0699">rRNA-binding</keyword>
<evidence type="ECO:0000255" key="1">
    <source>
        <dbReference type="HAMAP-Rule" id="MF_00270"/>
    </source>
</evidence>
<evidence type="ECO:0000256" key="2">
    <source>
        <dbReference type="SAM" id="MobiDB-lite"/>
    </source>
</evidence>
<evidence type="ECO:0000305" key="3"/>
<accession>Q57ER3</accession>
<name>RS18_BRUAB</name>
<protein>
    <recommendedName>
        <fullName evidence="1">Small ribosomal subunit protein bS18</fullName>
    </recommendedName>
    <alternativeName>
        <fullName evidence="3">30S ribosomal protein S18</fullName>
    </alternativeName>
</protein>